<keyword id="KW-0028">Amino-acid biosynthesis</keyword>
<keyword id="KW-0963">Cytoplasm</keyword>
<keyword id="KW-0554">One-carbon metabolism</keyword>
<keyword id="KW-0663">Pyridoxal phosphate</keyword>
<keyword id="KW-1185">Reference proteome</keyword>
<keyword id="KW-0808">Transferase</keyword>
<name>GLYA_BAUCH</name>
<protein>
    <recommendedName>
        <fullName evidence="1">Serine hydroxymethyltransferase</fullName>
        <shortName evidence="1">SHMT</shortName>
        <shortName evidence="1">Serine methylase</shortName>
        <ecNumber evidence="1">2.1.2.1</ecNumber>
    </recommendedName>
</protein>
<evidence type="ECO:0000255" key="1">
    <source>
        <dbReference type="HAMAP-Rule" id="MF_00051"/>
    </source>
</evidence>
<dbReference type="EC" id="2.1.2.1" evidence="1"/>
<dbReference type="EMBL" id="CP000238">
    <property type="protein sequence ID" value="ABF14257.1"/>
    <property type="molecule type" value="Genomic_DNA"/>
</dbReference>
<dbReference type="RefSeq" id="WP_011520216.1">
    <property type="nucleotide sequence ID" value="NC_007984.1"/>
</dbReference>
<dbReference type="SMR" id="Q1LU81"/>
<dbReference type="STRING" id="374463.BCI_0004"/>
<dbReference type="KEGG" id="bci:BCI_0004"/>
<dbReference type="HOGENOM" id="CLU_022477_2_1_6"/>
<dbReference type="OrthoDB" id="9803846at2"/>
<dbReference type="UniPathway" id="UPA00193"/>
<dbReference type="UniPathway" id="UPA00288">
    <property type="reaction ID" value="UER01023"/>
</dbReference>
<dbReference type="Proteomes" id="UP000002427">
    <property type="component" value="Chromosome"/>
</dbReference>
<dbReference type="GO" id="GO:0005829">
    <property type="term" value="C:cytosol"/>
    <property type="evidence" value="ECO:0007669"/>
    <property type="project" value="TreeGrafter"/>
</dbReference>
<dbReference type="GO" id="GO:0004372">
    <property type="term" value="F:glycine hydroxymethyltransferase activity"/>
    <property type="evidence" value="ECO:0007669"/>
    <property type="project" value="UniProtKB-UniRule"/>
</dbReference>
<dbReference type="GO" id="GO:0030170">
    <property type="term" value="F:pyridoxal phosphate binding"/>
    <property type="evidence" value="ECO:0007669"/>
    <property type="project" value="UniProtKB-UniRule"/>
</dbReference>
<dbReference type="GO" id="GO:0019264">
    <property type="term" value="P:glycine biosynthetic process from serine"/>
    <property type="evidence" value="ECO:0007669"/>
    <property type="project" value="UniProtKB-UniRule"/>
</dbReference>
<dbReference type="GO" id="GO:0035999">
    <property type="term" value="P:tetrahydrofolate interconversion"/>
    <property type="evidence" value="ECO:0007669"/>
    <property type="project" value="UniProtKB-UniRule"/>
</dbReference>
<dbReference type="CDD" id="cd00378">
    <property type="entry name" value="SHMT"/>
    <property type="match status" value="1"/>
</dbReference>
<dbReference type="FunFam" id="3.40.640.10:FF:000001">
    <property type="entry name" value="Serine hydroxymethyltransferase"/>
    <property type="match status" value="1"/>
</dbReference>
<dbReference type="FunFam" id="3.90.1150.10:FF:000003">
    <property type="entry name" value="Serine hydroxymethyltransferase"/>
    <property type="match status" value="1"/>
</dbReference>
<dbReference type="Gene3D" id="3.90.1150.10">
    <property type="entry name" value="Aspartate Aminotransferase, domain 1"/>
    <property type="match status" value="1"/>
</dbReference>
<dbReference type="Gene3D" id="3.40.640.10">
    <property type="entry name" value="Type I PLP-dependent aspartate aminotransferase-like (Major domain)"/>
    <property type="match status" value="1"/>
</dbReference>
<dbReference type="HAMAP" id="MF_00051">
    <property type="entry name" value="SHMT"/>
    <property type="match status" value="1"/>
</dbReference>
<dbReference type="InterPro" id="IPR015424">
    <property type="entry name" value="PyrdxlP-dep_Trfase"/>
</dbReference>
<dbReference type="InterPro" id="IPR015421">
    <property type="entry name" value="PyrdxlP-dep_Trfase_major"/>
</dbReference>
<dbReference type="InterPro" id="IPR015422">
    <property type="entry name" value="PyrdxlP-dep_Trfase_small"/>
</dbReference>
<dbReference type="InterPro" id="IPR001085">
    <property type="entry name" value="Ser_HO-MeTrfase"/>
</dbReference>
<dbReference type="InterPro" id="IPR049943">
    <property type="entry name" value="Ser_HO-MeTrfase-like"/>
</dbReference>
<dbReference type="InterPro" id="IPR019798">
    <property type="entry name" value="Ser_HO-MeTrfase_PLP_BS"/>
</dbReference>
<dbReference type="InterPro" id="IPR039429">
    <property type="entry name" value="SHMT-like_dom"/>
</dbReference>
<dbReference type="NCBIfam" id="NF000586">
    <property type="entry name" value="PRK00011.1"/>
    <property type="match status" value="1"/>
</dbReference>
<dbReference type="PANTHER" id="PTHR11680">
    <property type="entry name" value="SERINE HYDROXYMETHYLTRANSFERASE"/>
    <property type="match status" value="1"/>
</dbReference>
<dbReference type="PANTHER" id="PTHR11680:SF50">
    <property type="entry name" value="SERINE HYDROXYMETHYLTRANSFERASE"/>
    <property type="match status" value="1"/>
</dbReference>
<dbReference type="Pfam" id="PF00464">
    <property type="entry name" value="SHMT"/>
    <property type="match status" value="1"/>
</dbReference>
<dbReference type="PIRSF" id="PIRSF000412">
    <property type="entry name" value="SHMT"/>
    <property type="match status" value="1"/>
</dbReference>
<dbReference type="SUPFAM" id="SSF53383">
    <property type="entry name" value="PLP-dependent transferases"/>
    <property type="match status" value="1"/>
</dbReference>
<dbReference type="PROSITE" id="PS00096">
    <property type="entry name" value="SHMT"/>
    <property type="match status" value="1"/>
</dbReference>
<feature type="chain" id="PRO_1000006224" description="Serine hydroxymethyltransferase">
    <location>
        <begin position="1"/>
        <end position="417"/>
    </location>
</feature>
<feature type="binding site" evidence="1">
    <location>
        <position position="121"/>
    </location>
    <ligand>
        <name>(6S)-5,6,7,8-tetrahydrofolate</name>
        <dbReference type="ChEBI" id="CHEBI:57453"/>
    </ligand>
</feature>
<feature type="binding site" evidence="1">
    <location>
        <begin position="125"/>
        <end position="127"/>
    </location>
    <ligand>
        <name>(6S)-5,6,7,8-tetrahydrofolate</name>
        <dbReference type="ChEBI" id="CHEBI:57453"/>
    </ligand>
</feature>
<feature type="binding site" evidence="1">
    <location>
        <begin position="355"/>
        <end position="357"/>
    </location>
    <ligand>
        <name>(6S)-5,6,7,8-tetrahydrofolate</name>
        <dbReference type="ChEBI" id="CHEBI:57453"/>
    </ligand>
</feature>
<feature type="site" description="Plays an important role in substrate specificity" evidence="1">
    <location>
        <position position="228"/>
    </location>
</feature>
<feature type="modified residue" description="N6-(pyridoxal phosphate)lysine" evidence="1">
    <location>
        <position position="229"/>
    </location>
</feature>
<comment type="function">
    <text evidence="1">Catalyzes the reversible interconversion of serine and glycine with tetrahydrofolate (THF) serving as the one-carbon carrier. This reaction serves as the major source of one-carbon groups required for the biosynthesis of purines, thymidylate, methionine, and other important biomolecules. Also exhibits THF-independent aldolase activity toward beta-hydroxyamino acids, producing glycine and aldehydes, via a retro-aldol mechanism.</text>
</comment>
<comment type="catalytic activity">
    <reaction evidence="1">
        <text>(6R)-5,10-methylene-5,6,7,8-tetrahydrofolate + glycine + H2O = (6S)-5,6,7,8-tetrahydrofolate + L-serine</text>
        <dbReference type="Rhea" id="RHEA:15481"/>
        <dbReference type="ChEBI" id="CHEBI:15377"/>
        <dbReference type="ChEBI" id="CHEBI:15636"/>
        <dbReference type="ChEBI" id="CHEBI:33384"/>
        <dbReference type="ChEBI" id="CHEBI:57305"/>
        <dbReference type="ChEBI" id="CHEBI:57453"/>
        <dbReference type="EC" id="2.1.2.1"/>
    </reaction>
</comment>
<comment type="cofactor">
    <cofactor evidence="1">
        <name>pyridoxal 5'-phosphate</name>
        <dbReference type="ChEBI" id="CHEBI:597326"/>
    </cofactor>
</comment>
<comment type="pathway">
    <text evidence="1">One-carbon metabolism; tetrahydrofolate interconversion.</text>
</comment>
<comment type="pathway">
    <text evidence="1">Amino-acid biosynthesis; glycine biosynthesis; glycine from L-serine: step 1/1.</text>
</comment>
<comment type="subunit">
    <text evidence="1">Homodimer.</text>
</comment>
<comment type="subcellular location">
    <subcellularLocation>
        <location evidence="1">Cytoplasm</location>
    </subcellularLocation>
</comment>
<comment type="similarity">
    <text evidence="1">Belongs to the SHMT family.</text>
</comment>
<accession>Q1LU81</accession>
<gene>
    <name evidence="1" type="primary">glyA</name>
    <name type="ordered locus">BCI_0004</name>
</gene>
<sequence length="417" mass="45762">MFKYDINIANYDTALWKAIELEAKRQEEHIELIASENYTSPRVMQAQGSILTNKYAEGYSGKRYYGGCVYVDQVETLAIDRAKALFECDYANVQPHSGSQANFAVYTALLKPGDTILGMNLAHGGHLTHGASVNFSGKMYNVISYGVNKNGYIDYEQLNKLATMHKPKMIIGGFSAYSRVVDWDIMRQVADSIKAFLFVDMAHIAGLVAAGVYPNPVPYADVVTTTTHKTLAGPRGGLILAQGGSKEMYKKLDSAVFPGAQGGPLMHVIAGKAIALKEAMEPEFKIYQHQVVKNAKTMVNVFLNRNFNVVSGGTDNHLFLLDLVDKNITGQEADAALSYTNITVNKNIIPNDPQSSFVTSGIRIGTPAITRRGFNETDAYQLANWICDVLENINNEVVLNATKKKVLNICASHPVYS</sequence>
<proteinExistence type="inferred from homology"/>
<organism>
    <name type="scientific">Baumannia cicadellinicola subsp. Homalodisca coagulata</name>
    <dbReference type="NCBI Taxonomy" id="374463"/>
    <lineage>
        <taxon>Bacteria</taxon>
        <taxon>Pseudomonadati</taxon>
        <taxon>Pseudomonadota</taxon>
        <taxon>Gammaproteobacteria</taxon>
        <taxon>Candidatus Palibaumannia</taxon>
    </lineage>
</organism>
<reference key="1">
    <citation type="journal article" date="2006" name="PLoS Biol.">
        <title>Metabolic complementarity and genomics of the dual bacterial symbiosis of sharpshooters.</title>
        <authorList>
            <person name="Wu D."/>
            <person name="Daugherty S.C."/>
            <person name="Van Aken S.E."/>
            <person name="Pai G.H."/>
            <person name="Watkins K.L."/>
            <person name="Khouri H."/>
            <person name="Tallon L.J."/>
            <person name="Zaborsky J.M."/>
            <person name="Dunbar H.E."/>
            <person name="Tran P.L."/>
            <person name="Moran N.A."/>
            <person name="Eisen J.A."/>
        </authorList>
    </citation>
    <scope>NUCLEOTIDE SEQUENCE [LARGE SCALE GENOMIC DNA]</scope>
</reference>